<reference key="1">
    <citation type="journal article" date="2004" name="Nat. Biotechnol.">
        <title>The genome sequence of the capnophilic rumen bacterium Mannheimia succiniciproducens.</title>
        <authorList>
            <person name="Hong S.H."/>
            <person name="Kim J.S."/>
            <person name="Lee S.Y."/>
            <person name="In Y.H."/>
            <person name="Choi S.S."/>
            <person name="Rih J.-K."/>
            <person name="Kim C.H."/>
            <person name="Jeong H."/>
            <person name="Hur C.G."/>
            <person name="Kim J.J."/>
        </authorList>
    </citation>
    <scope>NUCLEOTIDE SEQUENCE [LARGE SCALE GENOMIC DNA]</scope>
    <source>
        <strain>KCTC 0769BP / MBEL55E</strain>
    </source>
</reference>
<name>BIOD_MANSM</name>
<gene>
    <name evidence="1" type="primary">bioD</name>
    <name type="ordered locus">MS1006</name>
</gene>
<accession>Q65TU7</accession>
<sequence length="242" mass="27217">MSVFFVTGTDTSVGKTIVSRAIIQAMQNAGIQIVGYKPLACGQDDPVYTDVQESGQTDYDNMDNRDVLVLQDSTNEEVSYQDINSYTFAHTMPMLSQEGKHIDINKINTDLKRLSSRYQSVLVEGSFGWLTPINQDYTFASWAAEHKMPVVLVVGIKEGCMNHALLTVQSIEQMGLPLLGWVANRINPMLGHYAEIIEDLSKRIKAPLLGKIPYMHKPETQELGHYITDIDRLSYMKTEILK</sequence>
<organism>
    <name type="scientific">Mannheimia succiniciproducens (strain KCTC 0769BP / MBEL55E)</name>
    <dbReference type="NCBI Taxonomy" id="221988"/>
    <lineage>
        <taxon>Bacteria</taxon>
        <taxon>Pseudomonadati</taxon>
        <taxon>Pseudomonadota</taxon>
        <taxon>Gammaproteobacteria</taxon>
        <taxon>Pasteurellales</taxon>
        <taxon>Pasteurellaceae</taxon>
        <taxon>Basfia</taxon>
    </lineage>
</organism>
<feature type="chain" id="PRO_0000302521" description="ATP-dependent dethiobiotin synthetase BioD">
    <location>
        <begin position="1"/>
        <end position="242"/>
    </location>
</feature>
<feature type="active site" evidence="1">
    <location>
        <position position="37"/>
    </location>
</feature>
<feature type="binding site" evidence="1">
    <location>
        <begin position="12"/>
        <end position="17"/>
    </location>
    <ligand>
        <name>ATP</name>
        <dbReference type="ChEBI" id="CHEBI:30616"/>
    </ligand>
</feature>
<feature type="binding site" evidence="1">
    <location>
        <position position="16"/>
    </location>
    <ligand>
        <name>Mg(2+)</name>
        <dbReference type="ChEBI" id="CHEBI:18420"/>
    </ligand>
</feature>
<feature type="binding site" evidence="1">
    <location>
        <position position="66"/>
    </location>
    <ligand>
        <name>ATP</name>
        <dbReference type="ChEBI" id="CHEBI:30616"/>
    </ligand>
</feature>
<feature type="binding site" evidence="1">
    <location>
        <position position="66"/>
    </location>
    <ligand>
        <name>Mg(2+)</name>
        <dbReference type="ChEBI" id="CHEBI:18420"/>
    </ligand>
</feature>
<feature type="binding site" evidence="1">
    <location>
        <position position="124"/>
    </location>
    <ligand>
        <name>Mg(2+)</name>
        <dbReference type="ChEBI" id="CHEBI:18420"/>
    </ligand>
</feature>
<feature type="binding site" evidence="1">
    <location>
        <begin position="184"/>
        <end position="185"/>
    </location>
    <ligand>
        <name>ATP</name>
        <dbReference type="ChEBI" id="CHEBI:30616"/>
    </ligand>
</feature>
<keyword id="KW-0067">ATP-binding</keyword>
<keyword id="KW-0093">Biotin biosynthesis</keyword>
<keyword id="KW-0963">Cytoplasm</keyword>
<keyword id="KW-0436">Ligase</keyword>
<keyword id="KW-0460">Magnesium</keyword>
<keyword id="KW-0479">Metal-binding</keyword>
<keyword id="KW-0547">Nucleotide-binding</keyword>
<dbReference type="EC" id="6.3.3.3" evidence="1"/>
<dbReference type="EMBL" id="AE016827">
    <property type="protein sequence ID" value="AAU37613.1"/>
    <property type="molecule type" value="Genomic_DNA"/>
</dbReference>
<dbReference type="RefSeq" id="WP_011200183.1">
    <property type="nucleotide sequence ID" value="NC_006300.1"/>
</dbReference>
<dbReference type="SMR" id="Q65TU7"/>
<dbReference type="STRING" id="221988.MS1006"/>
<dbReference type="KEGG" id="msu:MS1006"/>
<dbReference type="eggNOG" id="COG0132">
    <property type="taxonomic scope" value="Bacteria"/>
</dbReference>
<dbReference type="HOGENOM" id="CLU_072551_0_0_6"/>
<dbReference type="OrthoDB" id="9802097at2"/>
<dbReference type="UniPathway" id="UPA00078">
    <property type="reaction ID" value="UER00161"/>
</dbReference>
<dbReference type="Proteomes" id="UP000000607">
    <property type="component" value="Chromosome"/>
</dbReference>
<dbReference type="GO" id="GO:0005829">
    <property type="term" value="C:cytosol"/>
    <property type="evidence" value="ECO:0007669"/>
    <property type="project" value="TreeGrafter"/>
</dbReference>
<dbReference type="GO" id="GO:0005524">
    <property type="term" value="F:ATP binding"/>
    <property type="evidence" value="ECO:0007669"/>
    <property type="project" value="UniProtKB-UniRule"/>
</dbReference>
<dbReference type="GO" id="GO:0004141">
    <property type="term" value="F:dethiobiotin synthase activity"/>
    <property type="evidence" value="ECO:0007669"/>
    <property type="project" value="UniProtKB-UniRule"/>
</dbReference>
<dbReference type="GO" id="GO:0000287">
    <property type="term" value="F:magnesium ion binding"/>
    <property type="evidence" value="ECO:0007669"/>
    <property type="project" value="UniProtKB-UniRule"/>
</dbReference>
<dbReference type="GO" id="GO:0009102">
    <property type="term" value="P:biotin biosynthetic process"/>
    <property type="evidence" value="ECO:0007669"/>
    <property type="project" value="UniProtKB-UniRule"/>
</dbReference>
<dbReference type="CDD" id="cd03109">
    <property type="entry name" value="DTBS"/>
    <property type="match status" value="1"/>
</dbReference>
<dbReference type="FunFam" id="3.40.50.300:FF:000292">
    <property type="entry name" value="ATP-dependent dethiobiotin synthetase BioD"/>
    <property type="match status" value="1"/>
</dbReference>
<dbReference type="Gene3D" id="3.40.50.300">
    <property type="entry name" value="P-loop containing nucleotide triphosphate hydrolases"/>
    <property type="match status" value="1"/>
</dbReference>
<dbReference type="HAMAP" id="MF_00336">
    <property type="entry name" value="BioD"/>
    <property type="match status" value="1"/>
</dbReference>
<dbReference type="InterPro" id="IPR004472">
    <property type="entry name" value="DTB_synth_BioD"/>
</dbReference>
<dbReference type="InterPro" id="IPR027417">
    <property type="entry name" value="P-loop_NTPase"/>
</dbReference>
<dbReference type="NCBIfam" id="TIGR00347">
    <property type="entry name" value="bioD"/>
    <property type="match status" value="1"/>
</dbReference>
<dbReference type="PANTHER" id="PTHR43210">
    <property type="entry name" value="DETHIOBIOTIN SYNTHETASE"/>
    <property type="match status" value="1"/>
</dbReference>
<dbReference type="PANTHER" id="PTHR43210:SF5">
    <property type="entry name" value="DETHIOBIOTIN SYNTHETASE"/>
    <property type="match status" value="1"/>
</dbReference>
<dbReference type="Pfam" id="PF13500">
    <property type="entry name" value="AAA_26"/>
    <property type="match status" value="1"/>
</dbReference>
<dbReference type="PIRSF" id="PIRSF006755">
    <property type="entry name" value="DTB_synth"/>
    <property type="match status" value="1"/>
</dbReference>
<dbReference type="SUPFAM" id="SSF52540">
    <property type="entry name" value="P-loop containing nucleoside triphosphate hydrolases"/>
    <property type="match status" value="1"/>
</dbReference>
<evidence type="ECO:0000255" key="1">
    <source>
        <dbReference type="HAMAP-Rule" id="MF_00336"/>
    </source>
</evidence>
<comment type="function">
    <text evidence="1">Catalyzes a mechanistically unusual reaction, the ATP-dependent insertion of CO2 between the N7 and N8 nitrogen atoms of 7,8-diaminopelargonic acid (DAPA, also called 7,8-diammoniononanoate) to form a ureido ring.</text>
</comment>
<comment type="catalytic activity">
    <reaction evidence="1">
        <text>(7R,8S)-7,8-diammoniononanoate + CO2 + ATP = (4R,5S)-dethiobiotin + ADP + phosphate + 3 H(+)</text>
        <dbReference type="Rhea" id="RHEA:15805"/>
        <dbReference type="ChEBI" id="CHEBI:15378"/>
        <dbReference type="ChEBI" id="CHEBI:16526"/>
        <dbReference type="ChEBI" id="CHEBI:30616"/>
        <dbReference type="ChEBI" id="CHEBI:43474"/>
        <dbReference type="ChEBI" id="CHEBI:149469"/>
        <dbReference type="ChEBI" id="CHEBI:149473"/>
        <dbReference type="ChEBI" id="CHEBI:456216"/>
        <dbReference type="EC" id="6.3.3.3"/>
    </reaction>
</comment>
<comment type="cofactor">
    <cofactor evidence="1">
        <name>Mg(2+)</name>
        <dbReference type="ChEBI" id="CHEBI:18420"/>
    </cofactor>
</comment>
<comment type="pathway">
    <text evidence="1">Cofactor biosynthesis; biotin biosynthesis; biotin from 7,8-diaminononanoate: step 1/2.</text>
</comment>
<comment type="subunit">
    <text evidence="1">Homodimer.</text>
</comment>
<comment type="subcellular location">
    <subcellularLocation>
        <location evidence="1">Cytoplasm</location>
    </subcellularLocation>
</comment>
<comment type="similarity">
    <text evidence="1">Belongs to the dethiobiotin synthetase family.</text>
</comment>
<protein>
    <recommendedName>
        <fullName evidence="1">ATP-dependent dethiobiotin synthetase BioD</fullName>
        <ecNumber evidence="1">6.3.3.3</ecNumber>
    </recommendedName>
    <alternativeName>
        <fullName evidence="1">DTB synthetase</fullName>
        <shortName evidence="1">DTBS</shortName>
    </alternativeName>
    <alternativeName>
        <fullName evidence="1">Dethiobiotin synthase</fullName>
    </alternativeName>
</protein>
<proteinExistence type="inferred from homology"/>